<name>PTKL_PLABA</name>
<comment type="subcellular location">
    <subcellularLocation>
        <location evidence="7">Parasitophorous vacuole</location>
    </subcellularLocation>
    <subcellularLocation>
        <location evidence="10">Host cell membrane</location>
        <topology evidence="9">Peripheral membrane protein</topology>
    </subcellularLocation>
    <subcellularLocation>
        <location evidence="10">Host cytoplasm</location>
        <location evidence="10">Host cytoskeleton</location>
    </subcellularLocation>
    <subcellularLocation>
        <location evidence="7">Host cytoplasm</location>
    </subcellularLocation>
    <text evidence="7">During the trophozoite stages, secreted into the parasitophorous vacuole and into the host erythrocyte cytoplasm (PubMed:31148576). At the schizont stage, localizes to the parasitophorous vacuole but not to the host erythrocyte cytoplasm (PubMed:31148576).</text>
</comment>
<comment type="developmental stage">
    <text evidence="7">Expressed during parasite asexual blood stages, in trophozoite and schizont stages.</text>
</comment>
<comment type="domain">
    <text evidence="3">The protein kinase domain is predicted to be catalytically inactive.</text>
</comment>
<comment type="disruption phenotype">
    <text evidence="7">Normal infection and development in host erythrocytes (PubMed:31148576). Normal gametocyte production and male gametocyte activation (PubMed:31148576).</text>
</comment>
<comment type="similarity">
    <text evidence="9">Belongs to the protein kinase superfamily. TKL Ser/Thr protein kinase family.</text>
</comment>
<comment type="caution">
    <text evidence="1 10">Although it belongs to the kinase superfamily, contains an asparagine residue at the position of the canonical catalytic aspartic acid and is predicted to lack kinase activity. However, can bind ATP (By similarity).</text>
</comment>
<evidence type="ECO:0000250" key="1">
    <source>
        <dbReference type="UniProtKB" id="Q8IIT5"/>
    </source>
</evidence>
<evidence type="ECO:0000255" key="2"/>
<evidence type="ECO:0000255" key="3">
    <source>
        <dbReference type="PROSITE-ProRule" id="PRU00159"/>
    </source>
</evidence>
<evidence type="ECO:0000255" key="4">
    <source>
        <dbReference type="PROSITE-ProRule" id="PRU00184"/>
    </source>
</evidence>
<evidence type="ECO:0000255" key="5">
    <source>
        <dbReference type="PROSITE-ProRule" id="PRU00498"/>
    </source>
</evidence>
<evidence type="ECO:0000256" key="6">
    <source>
        <dbReference type="SAM" id="MobiDB-lite"/>
    </source>
</evidence>
<evidence type="ECO:0000269" key="7">
    <source>
    </source>
</evidence>
<evidence type="ECO:0000303" key="8">
    <source>
    </source>
</evidence>
<evidence type="ECO:0000305" key="9"/>
<evidence type="ECO:0000305" key="10">
    <source>
    </source>
</evidence>
<evidence type="ECO:0000312" key="11">
    <source>
        <dbReference type="EMBL" id="VUC55943.1"/>
    </source>
</evidence>
<evidence type="ECO:0000312" key="12">
    <source>
        <dbReference type="Proteomes" id="UP000074855"/>
    </source>
</evidence>
<organism evidence="12">
    <name type="scientific">Plasmodium berghei (strain Anka)</name>
    <dbReference type="NCBI Taxonomy" id="5823"/>
    <lineage>
        <taxon>Eukaryota</taxon>
        <taxon>Sar</taxon>
        <taxon>Alveolata</taxon>
        <taxon>Apicomplexa</taxon>
        <taxon>Aconoidasida</taxon>
        <taxon>Haemosporida</taxon>
        <taxon>Plasmodiidae</taxon>
        <taxon>Plasmodium</taxon>
        <taxon>Plasmodium (Vinckeia)</taxon>
    </lineage>
</organism>
<dbReference type="EMBL" id="LK023124">
    <property type="protein sequence ID" value="VUC55943.1"/>
    <property type="molecule type" value="Genomic_DNA"/>
</dbReference>
<dbReference type="FunCoup" id="A0A509AIU5">
    <property type="interactions" value="2"/>
</dbReference>
<dbReference type="STRING" id="5823.A0A509AIU5"/>
<dbReference type="GlyCosmos" id="A0A509AIU5">
    <property type="glycosylation" value="26 sites, No reported glycans"/>
</dbReference>
<dbReference type="VEuPathDB" id="PlasmoDB:PBANKA_0940100"/>
<dbReference type="InParanoid" id="A0A509AIU5"/>
<dbReference type="OMA" id="HIYCNNI"/>
<dbReference type="Proteomes" id="UP000074855">
    <property type="component" value="Chromosome 9"/>
</dbReference>
<dbReference type="GO" id="GO:0030430">
    <property type="term" value="C:host cell cytoplasm"/>
    <property type="evidence" value="ECO:0000314"/>
    <property type="project" value="UniProtKB"/>
</dbReference>
<dbReference type="GO" id="GO:0020002">
    <property type="term" value="C:host cell plasma membrane"/>
    <property type="evidence" value="ECO:0007669"/>
    <property type="project" value="UniProtKB-SubCell"/>
</dbReference>
<dbReference type="GO" id="GO:0044163">
    <property type="term" value="C:host cytoskeleton"/>
    <property type="evidence" value="ECO:0007669"/>
    <property type="project" value="UniProtKB-SubCell"/>
</dbReference>
<dbReference type="GO" id="GO:0016020">
    <property type="term" value="C:membrane"/>
    <property type="evidence" value="ECO:0007669"/>
    <property type="project" value="UniProtKB-KW"/>
</dbReference>
<dbReference type="GO" id="GO:0020003">
    <property type="term" value="C:symbiont-containing vacuole"/>
    <property type="evidence" value="ECO:0000314"/>
    <property type="project" value="UniProtKB"/>
</dbReference>
<dbReference type="GO" id="GO:0005524">
    <property type="term" value="F:ATP binding"/>
    <property type="evidence" value="ECO:0007669"/>
    <property type="project" value="UniProtKB-KW"/>
</dbReference>
<dbReference type="GO" id="GO:0004674">
    <property type="term" value="F:protein serine/threonine kinase activity"/>
    <property type="evidence" value="ECO:0007669"/>
    <property type="project" value="TreeGrafter"/>
</dbReference>
<dbReference type="Gene3D" id="2.20.110.10">
    <property type="entry name" value="Histone H3 K4-specific methyltransferase SET7/9 N-terminal domain"/>
    <property type="match status" value="1"/>
</dbReference>
<dbReference type="Gene3D" id="3.30.200.20">
    <property type="entry name" value="Phosphorylase Kinase, domain 1"/>
    <property type="match status" value="1"/>
</dbReference>
<dbReference type="Gene3D" id="1.10.150.50">
    <property type="entry name" value="Transcription Factor, Ets-1"/>
    <property type="match status" value="1"/>
</dbReference>
<dbReference type="Gene3D" id="1.10.510.10">
    <property type="entry name" value="Transferase(Phosphotransferase) domain 1"/>
    <property type="match status" value="2"/>
</dbReference>
<dbReference type="InterPro" id="IPR011009">
    <property type="entry name" value="Kinase-like_dom_sf"/>
</dbReference>
<dbReference type="InterPro" id="IPR003409">
    <property type="entry name" value="MORN"/>
</dbReference>
<dbReference type="InterPro" id="IPR000719">
    <property type="entry name" value="Prot_kinase_dom"/>
</dbReference>
<dbReference type="InterPro" id="IPR001660">
    <property type="entry name" value="SAM"/>
</dbReference>
<dbReference type="InterPro" id="IPR013761">
    <property type="entry name" value="SAM/pointed_sf"/>
</dbReference>
<dbReference type="InterPro" id="IPR001245">
    <property type="entry name" value="Ser-Thr/Tyr_kinase_cat_dom"/>
</dbReference>
<dbReference type="InterPro" id="IPR051681">
    <property type="entry name" value="Ser/Thr_Kinases-Pseudokinases"/>
</dbReference>
<dbReference type="PANTHER" id="PTHR44329:SF140">
    <property type="entry name" value="INACTIVE PROTEIN TYROSINE KINASE PTKL"/>
    <property type="match status" value="1"/>
</dbReference>
<dbReference type="PANTHER" id="PTHR44329">
    <property type="entry name" value="SERINE/THREONINE-PROTEIN KINASE TNNI3K-RELATED"/>
    <property type="match status" value="1"/>
</dbReference>
<dbReference type="Pfam" id="PF02493">
    <property type="entry name" value="MORN"/>
    <property type="match status" value="2"/>
</dbReference>
<dbReference type="Pfam" id="PF07714">
    <property type="entry name" value="PK_Tyr_Ser-Thr"/>
    <property type="match status" value="1"/>
</dbReference>
<dbReference type="Pfam" id="PF00069">
    <property type="entry name" value="Pkinase"/>
    <property type="match status" value="1"/>
</dbReference>
<dbReference type="SMART" id="SM00220">
    <property type="entry name" value="S_TKc"/>
    <property type="match status" value="1"/>
</dbReference>
<dbReference type="SUPFAM" id="SSF82185">
    <property type="entry name" value="Histone H3 K4-specific methyltransferase SET7/9 N-terminal domain"/>
    <property type="match status" value="1"/>
</dbReference>
<dbReference type="SUPFAM" id="SSF56112">
    <property type="entry name" value="Protein kinase-like (PK-like)"/>
    <property type="match status" value="1"/>
</dbReference>
<dbReference type="SUPFAM" id="SSF47769">
    <property type="entry name" value="SAM/Pointed domain"/>
    <property type="match status" value="1"/>
</dbReference>
<dbReference type="PROSITE" id="PS50011">
    <property type="entry name" value="PROTEIN_KINASE_DOM"/>
    <property type="match status" value="1"/>
</dbReference>
<dbReference type="PROSITE" id="PS50105">
    <property type="entry name" value="SAM_DOMAIN"/>
    <property type="match status" value="1"/>
</dbReference>
<accession>A0A509AIU5</accession>
<protein>
    <recommendedName>
        <fullName evidence="9">Inactive protein tyrosine kinase pTKL</fullName>
    </recommendedName>
    <alternativeName>
        <fullName evidence="8">PbpTKL</fullName>
    </alternativeName>
    <alternativeName>
        <fullName evidence="8">Pseudo-tyrosine kinase-like protein</fullName>
    </alternativeName>
</protein>
<proteinExistence type="evidence at transcript level"/>
<gene>
    <name evidence="8" type="primary">pTKL</name>
    <name evidence="11" type="ORF">PBANKA_0940100</name>
</gene>
<keyword id="KW-0067">ATP-binding</keyword>
<keyword id="KW-0325">Glycoprotein</keyword>
<keyword id="KW-1032">Host cell membrane</keyword>
<keyword id="KW-1035">Host cytoplasm</keyword>
<keyword id="KW-1037">Host cytoskeleton</keyword>
<keyword id="KW-1043">Host membrane</keyword>
<keyword id="KW-0472">Membrane</keyword>
<keyword id="KW-0547">Nucleotide-binding</keyword>
<keyword id="KW-1185">Reference proteome</keyword>
<keyword id="KW-0677">Repeat</keyword>
<reference evidence="12" key="1">
    <citation type="journal article" date="2014" name="BMC Biol.">
        <title>A comprehensive evaluation of rodent malaria parasite genomes and gene expression.</title>
        <authorList>
            <person name="Otto T.D."/>
            <person name="Bohme U."/>
            <person name="Jackson A.P."/>
            <person name="Hunt M."/>
            <person name="Franke-Fayard B."/>
            <person name="Hoeijmakers W.A."/>
            <person name="Religa A.A."/>
            <person name="Robertson L."/>
            <person name="Sanders M."/>
            <person name="Ogun S.A."/>
            <person name="Cunningham D."/>
            <person name="Erhart A."/>
            <person name="Billker O."/>
            <person name="Khan S.M."/>
            <person name="Stunnenberg H.G."/>
            <person name="Langhorne J."/>
            <person name="Holder A.A."/>
            <person name="Waters A.P."/>
            <person name="Newbold C.I."/>
            <person name="Pain A."/>
            <person name="Berriman M."/>
            <person name="Janse C.J."/>
        </authorList>
    </citation>
    <scope>NUCLEOTIDE SEQUENCE [LARGE SCALE GENOMIC DNA]</scope>
    <source>
        <strain evidence="12">ANKA</strain>
    </source>
</reference>
<reference evidence="9" key="2">
    <citation type="journal article" date="2019" name="Sci. Rep.">
        <title>Plasmodium pseudo-Tyrosine Kinase-like binds PP1 and SERA5 and is exported to host erythrocytes.</title>
        <authorList>
            <person name="Gnangnon B."/>
            <person name="Freville A."/>
            <person name="Cailliau K."/>
            <person name="Leroy C."/>
            <person name="De Witte C."/>
            <person name="Tulasne D."/>
            <person name="Martoriarti A."/>
            <person name="Jung V."/>
            <person name="Guerrera I.C."/>
            <person name="Marion S."/>
            <person name="Khalife J."/>
            <person name="Pierrot C."/>
        </authorList>
    </citation>
    <scope>SUBCELLULAR LOCATION</scope>
    <scope>DEVELOPMENTAL STAGE</scope>
    <scope>DISRUPTION PHENOTYPE</scope>
</reference>
<sequence length="1313" mass="154563">MGNINSIQTKNYIKFEKYYYAGDLNVDNLPHGRGLMLYENGNSFFGHFINGKKHGKGIYIDKNLTKYISKWKYDHISNKVKVKQFDSDIVYLFYYKNGLIDHCKVYEYISNKKKKKKKKNDGILEDSEIQNRSINFEKDNIMIIQNCQEKSIVNKKEEIIDIPNNKYNENDDTDKVDNFSKKINLEQSQNNMLKYKKKKTFDEMNSLNDSIFCSSCESTSKSIGSDYISHFEKKEKQINKQEDELKKSKENYMNHSEYSNSSTNFENNKIKDISDESIMLRLKNIINNNTDLKIENYELWNKEQVAQWLSLCNVPMKWALSVYKNNINGQRLNNLNLYFIRNKLGILSYGQAIKFLQLIKNLRVTAYNTRFSNTLNLEEYEIYLKKKMKKKKMRENKDGEYTATTSSQAEDFQKNNQKIIMNQIKSMIDQKNDDDKSFSDKIKNGFFKGNTNIRNLQNLVINSIWNKSKDEFKIPIDENNVPMNIEKGKELNTNDQITGKKKKKLKNKYINHIQKNISMLKKLNNASNESQSSNESVTQILSTSSESSFANIHSGLSSKMLFHDKLEPEPIKPNKEKEENNPNLSPIINSKNETNLLNDSNPTKLQDELPKSPCSIDSESSSEKSSETSSETSSFCSEHSEFANFHNNNKIVKYSNNIYINSSLAFSYIYSFIIPPENLTFLYQIRNYYVRDVENDLNPNNELDFCDSFNFYKNCEIIKNRIINPGIRNCSYASNHSKFQQNKNRKYFNYSDCKNERKKTKPQKMKSRVFRGRYMGKDVAIKVLVGNIKNFTKFHKVLYKLYILRHTNIALIMGVSISYPFVFIIYEYIKNLCLFSYLHCVKYKHIYVSKLLKYYQKKFINQNFQQQNNTMSSDRKYISNDDNEKINFDSRNILRNKLLEIKCKNNAKNKITEKNNLKDEQIYSSSTSIKSLDTSSSNMNNTKLKNINFNKNRYINKIHSMFRNKNNILCGNYYYLFRKKKNNISISHEHKNSDRTIFTNESQNLLKNKISQKKINKKLNFKAKIKINRPYAFPPLQEDFNFYLEKKKKKKKILFSYLKTHSYFKSKKCDSRKNKLSDHQIMKIIMDITLACSYLEKQKVRWINLKPTNILLDGSLNAKISDFGIKEIEQCLDINIDYSYIVFPNNVIKFNNKHFKNKIKKIKIVNKGSEDMLHVFSSKNHIYKYNTREINVSSNTHNSSVFFWTSPEILKGKQSPSLYSDVYAYGIILWELMTNSVPFNYRFKSHLLASVGYAKESLPFQNIPPFIKNLIKSCINRNKYKRPTFDRILIEISMIYEQINPKEEDALMSFMDG</sequence>
<feature type="chain" id="PRO_0000450199" description="Inactive protein tyrosine kinase pTKL">
    <location>
        <begin position="1"/>
        <end position="1313"/>
    </location>
</feature>
<feature type="repeat" description="MORN 1" evidence="2">
    <location>
        <begin position="20"/>
        <end position="42"/>
    </location>
</feature>
<feature type="repeat" description="MORN 2" evidence="2">
    <location>
        <begin position="45"/>
        <end position="63"/>
    </location>
</feature>
<feature type="domain" description="SAM" evidence="4">
    <location>
        <begin position="300"/>
        <end position="365"/>
    </location>
</feature>
<feature type="domain" description="Protein kinase" evidence="3">
    <location>
        <begin position="962"/>
        <end position="1294"/>
    </location>
</feature>
<feature type="region of interest" description="Disordered" evidence="6">
    <location>
        <begin position="569"/>
        <end position="631"/>
    </location>
</feature>
<feature type="short sequence motif" description="RVxF motif" evidence="1">
    <location>
        <begin position="1052"/>
        <end position="1055"/>
    </location>
</feature>
<feature type="compositionally biased region" description="Basic and acidic residues" evidence="6">
    <location>
        <begin position="569"/>
        <end position="580"/>
    </location>
</feature>
<feature type="compositionally biased region" description="Polar residues" evidence="6">
    <location>
        <begin position="586"/>
        <end position="604"/>
    </location>
</feature>
<feature type="binding site" evidence="3">
    <location>
        <position position="782"/>
    </location>
    <ligand>
        <name>ATP</name>
        <dbReference type="ChEBI" id="CHEBI:30616"/>
    </ligand>
</feature>
<feature type="glycosylation site" description="N-linked (GlcNAc...) asparagine" evidence="5">
    <location>
        <position position="63"/>
    </location>
</feature>
<feature type="glycosylation site" description="N-linked (GlcNAc...) asparagine" evidence="5">
    <location>
        <position position="131"/>
    </location>
</feature>
<feature type="glycosylation site" description="N-linked (GlcNAc...) asparagine" evidence="5">
    <location>
        <position position="178"/>
    </location>
</feature>
<feature type="glycosylation site" description="N-linked (GlcNAc...) asparagine" evidence="5">
    <location>
        <position position="208"/>
    </location>
</feature>
<feature type="glycosylation site" description="N-linked (GlcNAc...) asparagine" evidence="5">
    <location>
        <position position="254"/>
    </location>
</feature>
<feature type="glycosylation site" description="N-linked (GlcNAc...) asparagine" evidence="5">
    <location>
        <position position="260"/>
    </location>
</feature>
<feature type="glycosylation site" description="N-linked (GlcNAc...) asparagine" evidence="5">
    <location>
        <position position="288"/>
    </location>
</feature>
<feature type="glycosylation site" description="N-linked (GlcNAc...) asparagine" evidence="5">
    <location>
        <position position="466"/>
    </location>
</feature>
<feature type="glycosylation site" description="N-linked (GlcNAc...) asparagine" evidence="5">
    <location>
        <position position="516"/>
    </location>
</feature>
<feature type="glycosylation site" description="N-linked (GlcNAc...) asparagine" evidence="5">
    <location>
        <position position="525"/>
    </location>
</feature>
<feature type="glycosylation site" description="N-linked (GlcNAc...) asparagine" evidence="5">
    <location>
        <position position="528"/>
    </location>
</feature>
<feature type="glycosylation site" description="N-linked (GlcNAc...) asparagine" evidence="5">
    <location>
        <position position="534"/>
    </location>
</feature>
<feature type="glycosylation site" description="N-linked (GlcNAc...) asparagine" evidence="5">
    <location>
        <position position="592"/>
    </location>
</feature>
<feature type="glycosylation site" description="N-linked (GlcNAc...) asparagine" evidence="5">
    <location>
        <position position="598"/>
    </location>
</feature>
<feature type="glycosylation site" description="N-linked (GlcNAc...) asparagine" evidence="5">
    <location>
        <position position="661"/>
    </location>
</feature>
<feature type="glycosylation site" description="N-linked (GlcNAc...) asparagine" evidence="5">
    <location>
        <position position="678"/>
    </location>
</feature>
<feature type="glycosylation site" description="N-linked (GlcNAc...) asparagine" evidence="5">
    <location>
        <position position="729"/>
    </location>
</feature>
<feature type="glycosylation site" description="N-linked (GlcNAc...) asparagine" evidence="5">
    <location>
        <position position="735"/>
    </location>
</feature>
<feature type="glycosylation site" description="N-linked (GlcNAc...) asparagine" evidence="5">
    <location>
        <position position="749"/>
    </location>
</feature>
<feature type="glycosylation site" description="N-linked (GlcNAc...) asparagine" evidence="5">
    <location>
        <position position="790"/>
    </location>
</feature>
<feature type="glycosylation site" description="N-linked (GlcNAc...) asparagine" evidence="5">
    <location>
        <position position="868"/>
    </location>
</feature>
<feature type="glycosylation site" description="N-linked (GlcNAc...) asparagine" evidence="5">
    <location>
        <position position="940"/>
    </location>
</feature>
<feature type="glycosylation site" description="N-linked (GlcNAc...) asparagine" evidence="5">
    <location>
        <position position="983"/>
    </location>
</feature>
<feature type="glycosylation site" description="N-linked (GlcNAc...) asparagine" evidence="5">
    <location>
        <position position="1000"/>
    </location>
</feature>
<feature type="glycosylation site" description="N-linked (GlcNAc...) asparagine" evidence="5">
    <location>
        <position position="1191"/>
    </location>
</feature>
<feature type="glycosylation site" description="N-linked (GlcNAc...) asparagine" evidence="5">
    <location>
        <position position="1198"/>
    </location>
</feature>